<sequence>MTKQPEDWLDDVPGDDIEDEDDEIIWVSKSEIKRDAEELKRLGAEIVDLGKNALDKIPLDADLRAAIELAQRIKMEGRRRQLQLIGKMLRQRDVEPIRQALDKLKNRHNQQVVLFHKLENLRDRLIDQGDDAIAEVLNLWPDADRQQLRTLIRNAKKEKEGNKPPKSARQIFQYLRELAENEG</sequence>
<accession>P0A8X0</accession>
<accession>P26650</accession>
<accession>Q2M672</accession>
<proteinExistence type="evidence at protein level"/>
<organism>
    <name type="scientific">Escherichia coli (strain K12)</name>
    <dbReference type="NCBI Taxonomy" id="83333"/>
    <lineage>
        <taxon>Bacteria</taxon>
        <taxon>Pseudomonadati</taxon>
        <taxon>Pseudomonadota</taxon>
        <taxon>Gammaproteobacteria</taxon>
        <taxon>Enterobacterales</taxon>
        <taxon>Enterobacteriaceae</taxon>
        <taxon>Escherichia</taxon>
    </lineage>
</organism>
<gene>
    <name evidence="1 6" type="primary">darP</name>
    <name evidence="6" type="synonym">yjgA</name>
    <name evidence="8" type="ordered locus">b4234</name>
    <name type="ordered locus">JW4193</name>
</gene>
<dbReference type="EMBL" id="M95096">
    <property type="protein sequence ID" value="AAA24760.1"/>
    <property type="molecule type" value="Genomic_DNA"/>
</dbReference>
<dbReference type="EMBL" id="D44452">
    <property type="protein sequence ID" value="BAA07914.1"/>
    <property type="molecule type" value="Genomic_DNA"/>
</dbReference>
<dbReference type="EMBL" id="U14003">
    <property type="protein sequence ID" value="AAA97131.1"/>
    <property type="molecule type" value="Genomic_DNA"/>
</dbReference>
<dbReference type="EMBL" id="U00096">
    <property type="protein sequence ID" value="AAC77191.1"/>
    <property type="molecule type" value="Genomic_DNA"/>
</dbReference>
<dbReference type="EMBL" id="AP009048">
    <property type="protein sequence ID" value="BAE78234.1"/>
    <property type="molecule type" value="Genomic_DNA"/>
</dbReference>
<dbReference type="PIR" id="S56460">
    <property type="entry name" value="S56460"/>
</dbReference>
<dbReference type="RefSeq" id="NP_418655.1">
    <property type="nucleotide sequence ID" value="NC_000913.3"/>
</dbReference>
<dbReference type="RefSeq" id="WP_000166270.1">
    <property type="nucleotide sequence ID" value="NZ_STEB01000013.1"/>
</dbReference>
<dbReference type="PDB" id="7BL5">
    <property type="method" value="EM"/>
    <property type="resolution" value="3.30 A"/>
    <property type="chains" value="8=1-183"/>
</dbReference>
<dbReference type="PDB" id="9H3Q">
    <property type="method" value="EM"/>
    <property type="resolution" value="4.02 A"/>
    <property type="chains" value="C=1-183"/>
</dbReference>
<dbReference type="PDB" id="9H3R">
    <property type="method" value="EM"/>
    <property type="resolution" value="4.12 A"/>
    <property type="chains" value="C=1-183"/>
</dbReference>
<dbReference type="PDB" id="9H3S">
    <property type="method" value="EM"/>
    <property type="resolution" value="4.16 A"/>
    <property type="chains" value="C=1-183"/>
</dbReference>
<dbReference type="PDBsum" id="7BL5"/>
<dbReference type="PDBsum" id="9H3Q"/>
<dbReference type="PDBsum" id="9H3R"/>
<dbReference type="PDBsum" id="9H3S"/>
<dbReference type="EMDB" id="EMD-51834"/>
<dbReference type="EMDB" id="EMD-51835"/>
<dbReference type="EMDB" id="EMD-51836"/>
<dbReference type="SMR" id="P0A8X0"/>
<dbReference type="BioGRID" id="4260635">
    <property type="interactions" value="20"/>
</dbReference>
<dbReference type="BioGRID" id="853040">
    <property type="interactions" value="1"/>
</dbReference>
<dbReference type="DIP" id="DIP-47895N"/>
<dbReference type="FunCoup" id="P0A8X0">
    <property type="interactions" value="97"/>
</dbReference>
<dbReference type="IntAct" id="P0A8X0">
    <property type="interactions" value="11"/>
</dbReference>
<dbReference type="STRING" id="511145.b4234"/>
<dbReference type="jPOST" id="P0A8X0"/>
<dbReference type="PaxDb" id="511145-b4234"/>
<dbReference type="EnsemblBacteria" id="AAC77191">
    <property type="protein sequence ID" value="AAC77191"/>
    <property type="gene ID" value="b4234"/>
</dbReference>
<dbReference type="GeneID" id="93777591"/>
<dbReference type="GeneID" id="948751"/>
<dbReference type="KEGG" id="ecj:JW4193"/>
<dbReference type="KEGG" id="eco:b4234"/>
<dbReference type="KEGG" id="ecoc:C3026_22855"/>
<dbReference type="PATRIC" id="fig|511145.12.peg.4365"/>
<dbReference type="EchoBASE" id="EB1382"/>
<dbReference type="eggNOG" id="COG3028">
    <property type="taxonomic scope" value="Bacteria"/>
</dbReference>
<dbReference type="HOGENOM" id="CLU_106757_2_0_6"/>
<dbReference type="InParanoid" id="P0A8X0"/>
<dbReference type="OMA" id="QMQFVGK"/>
<dbReference type="OrthoDB" id="5293604at2"/>
<dbReference type="PhylomeDB" id="P0A8X0"/>
<dbReference type="BioCyc" id="EcoCyc:EG11410-MONOMER"/>
<dbReference type="PRO" id="PR:P0A8X0"/>
<dbReference type="Proteomes" id="UP000000625">
    <property type="component" value="Chromosome"/>
</dbReference>
<dbReference type="GO" id="GO:0005829">
    <property type="term" value="C:cytosol"/>
    <property type="evidence" value="ECO:0000314"/>
    <property type="project" value="EcoCyc"/>
</dbReference>
<dbReference type="GO" id="GO:0043023">
    <property type="term" value="F:ribosomal large subunit binding"/>
    <property type="evidence" value="ECO:0000314"/>
    <property type="project" value="EcoCyc"/>
</dbReference>
<dbReference type="GO" id="GO:0019843">
    <property type="term" value="F:rRNA binding"/>
    <property type="evidence" value="ECO:0007669"/>
    <property type="project" value="UniProtKB-UniRule"/>
</dbReference>
<dbReference type="GO" id="GO:1902626">
    <property type="term" value="P:assembly of large subunit precursor of preribosome"/>
    <property type="evidence" value="ECO:0007669"/>
    <property type="project" value="UniProtKB-UniRule"/>
</dbReference>
<dbReference type="CDD" id="cd16331">
    <property type="entry name" value="YjgA-like"/>
    <property type="match status" value="1"/>
</dbReference>
<dbReference type="FunFam" id="1.10.60.30:FF:000001">
    <property type="entry name" value="UPF0307 protein YjgA"/>
    <property type="match status" value="1"/>
</dbReference>
<dbReference type="FunFam" id="1.10.60.30:FF:000002">
    <property type="entry name" value="UPF0307 protein YjgA"/>
    <property type="match status" value="1"/>
</dbReference>
<dbReference type="Gene3D" id="1.10.60.30">
    <property type="entry name" value="PSPTO4464-like domains"/>
    <property type="match status" value="2"/>
</dbReference>
<dbReference type="HAMAP" id="MF_00765">
    <property type="entry name" value="DarP"/>
    <property type="match status" value="1"/>
</dbReference>
<dbReference type="InterPro" id="IPR006839">
    <property type="entry name" value="DarP"/>
</dbReference>
<dbReference type="InterPro" id="IPR023153">
    <property type="entry name" value="DarP_sf"/>
</dbReference>
<dbReference type="NCBIfam" id="NF003593">
    <property type="entry name" value="PRK05255.1-1"/>
    <property type="match status" value="1"/>
</dbReference>
<dbReference type="PANTHER" id="PTHR38101">
    <property type="entry name" value="UPF0307 PROTEIN YJGA"/>
    <property type="match status" value="1"/>
</dbReference>
<dbReference type="PANTHER" id="PTHR38101:SF1">
    <property type="entry name" value="UPF0307 PROTEIN YJGA"/>
    <property type="match status" value="1"/>
</dbReference>
<dbReference type="Pfam" id="PF04751">
    <property type="entry name" value="DarP"/>
    <property type="match status" value="1"/>
</dbReference>
<dbReference type="PIRSF" id="PIRSF016183">
    <property type="entry name" value="UCP016183"/>
    <property type="match status" value="1"/>
</dbReference>
<dbReference type="SUPFAM" id="SSF158710">
    <property type="entry name" value="PSPTO4464-like"/>
    <property type="match status" value="1"/>
</dbReference>
<name>DARP_ECOLI</name>
<comment type="function">
    <text evidence="1 3 4 10">Member of a network of 50S ribosomal subunit biogenesis factors (ObgE, RluD, RsfS and DarP) which assembles along the 30S-50S interface, preventing incorrect 23S rRNA structures from forming (PubMed:33639093). Promotes peptidyl transferase center (PTC) maturation (PubMed:33639093). Binds pre-50S ribosomal subunits near the 23S rRNA L1 stalk, where it may mediate correct positioning of the L1 stalk (PubMed:33639093). Plays a dual role in the late stages of assembly of the 50S ribosomal subunit; promotes peptidyl transferase center (PTC) maturation by modulating the docking of 23S rRNA helix H68, and maintains the stability of helix H89 with the help of uL16 (rplP), facilitating the final maturation of the PTC (Probable) (PubMed:38842932). Overexpression slows growth at 37 degrees Celsius (PubMed:38842932).</text>
</comment>
<comment type="subunit">
    <text evidence="3 4">Interacts with RluD in late stage pre-50S ribosomal subunits (PubMed:33639093). Interacts with ribosomal protein uL16 (rlpP), via the N-terminal loop of this protein (PubMed:38842932).</text>
</comment>
<comment type="subcellular location">
    <subcellularLocation>
        <location evidence="1 2 4">Cytoplasm</location>
    </subcellularLocation>
    <text evidence="1 2 3 4">Associates with late stage pre-50S ribosomal subunits (PubMed:16980477, PubMed:33639093, PubMed:38842932).</text>
</comment>
<comment type="domain">
    <text evidence="4">Has several regions, N-terminal loop (residues 1-25), a central domain (residues 26-105), joined by linker (residues 105-116) to the C-terminal domain (residues 117-183) (PubMed:38842932). The C-terminal domain is not required for function, while the N-terminal loop is; shortening the linker decreases assembly (PubMed:38842932).</text>
</comment>
<comment type="disruption phenotype">
    <text evidence="4">Slow growth at 16 degrees Celsius, accumulates a pre-50S ribosomal assembly particle, although some mature 50S subunits are formed (PubMed:38842932). Ribosomal proteins uL16, bL33, bL35 and bL36 are missing while 23S rRNA helices H38, the L1 stalk and H89 (part of the peptidyl transferase center) are incorrectly positioned (PubMed:38842932).</text>
</comment>
<comment type="similarity">
    <text evidence="1">Belongs to the DarP family.</text>
</comment>
<protein>
    <recommendedName>
        <fullName evidence="1">Dual-action ribosomal maturation protein DarP</fullName>
    </recommendedName>
    <alternativeName>
        <fullName evidence="7">21K protein</fullName>
    </alternativeName>
    <alternativeName>
        <fullName evidence="1 5">Large ribosomal subunit assembly factor DarP</fullName>
    </alternativeName>
    <alternativeName>
        <fullName evidence="9">x96 protein</fullName>
    </alternativeName>
</protein>
<evidence type="ECO:0000255" key="1">
    <source>
        <dbReference type="HAMAP-Rule" id="MF_00765"/>
    </source>
</evidence>
<evidence type="ECO:0000269" key="2">
    <source>
    </source>
</evidence>
<evidence type="ECO:0000269" key="3">
    <source>
    </source>
</evidence>
<evidence type="ECO:0000269" key="4">
    <source>
    </source>
</evidence>
<evidence type="ECO:0000303" key="5">
    <source>
    </source>
</evidence>
<evidence type="ECO:0000303" key="6">
    <source>
    </source>
</evidence>
<evidence type="ECO:0000303" key="7">
    <source>
    </source>
</evidence>
<evidence type="ECO:0000303" key="8">
    <source>
    </source>
</evidence>
<evidence type="ECO:0000303" key="9">
    <source ref="1"/>
</evidence>
<evidence type="ECO:0000305" key="10">
    <source>
    </source>
</evidence>
<evidence type="ECO:0007744" key="11">
    <source>
        <dbReference type="PDB" id="7BL5"/>
    </source>
</evidence>
<evidence type="ECO:0007829" key="12">
    <source>
        <dbReference type="PDB" id="7BL5"/>
    </source>
</evidence>
<feature type="chain" id="PRO_0000208213" description="Dual-action ribosomal maturation protein DarP">
    <location>
        <begin position="1"/>
        <end position="183"/>
    </location>
</feature>
<feature type="region of interest" description="Not required for functional ribosome assembly" evidence="4">
    <location>
        <begin position="111"/>
        <end position="183"/>
    </location>
</feature>
<feature type="mutagenesis site" description="Phenocopies a deletion, incomplete assembly of 50S ribosomal subunits, no longer interacts with ribosomal protein uL16." evidence="4">
    <location>
        <begin position="1"/>
        <end position="24"/>
    </location>
</feature>
<feature type="mutagenesis site" description="Significant increase in pre-50S ribosome subunits, no longer interacts with ribosomal protein uL16, severe growth defect." evidence="4">
    <original>EDWLDDVPGDDIEDEDDE</original>
    <variation>AAWLAAVPGAAIAAAAAA</variation>
    <location>
        <begin position="6"/>
        <end position="23"/>
    </location>
</feature>
<feature type="mutagenesis site" description="Significant increase in pre-50S ribosome subunits." evidence="4">
    <original>E</original>
    <variation>A</variation>
    <location>
        <position position="6"/>
    </location>
</feature>
<feature type="mutagenesis site" description="Increased pre-50S subunit, altered 30S/50S ratio, severe growth defect." evidence="4">
    <original>D</original>
    <variation>A</variation>
    <location>
        <position position="7"/>
    </location>
</feature>
<feature type="mutagenesis site" description="Increased pre-50S subunit, altered 30S/50S ratio, severe growth defect." evidence="4">
    <original>D</original>
    <variation>A</variation>
    <location>
        <position position="11"/>
    </location>
</feature>
<feature type="mutagenesis site" description="No effect on 50S ribosome assembly, still interacts with uL16." evidence="4">
    <original>D</original>
    <variation>A</variation>
    <location>
        <position position="15"/>
    </location>
</feature>
<feature type="mutagenesis site" description="Increased pre-50S subunit, altered 30S/50S ratio." evidence="4">
    <original>D</original>
    <variation>A</variation>
    <location>
        <position position="16"/>
    </location>
</feature>
<feature type="mutagenesis site" description="Increased pre-50S subunit, altered 30S/50S ratio." evidence="4">
    <original>I</original>
    <variation>N</variation>
    <location>
        <position position="17"/>
    </location>
</feature>
<feature type="mutagenesis site" description="Increased pre-50S subunit, altered 30S/50S ratio." evidence="4">
    <original>E</original>
    <variation>A</variation>
    <location>
        <position position="20"/>
    </location>
</feature>
<feature type="mutagenesis site" description="Significant increase in pre-50S ribosome subunits." evidence="4">
    <original>D</original>
    <variation>A</variation>
    <location>
        <position position="21"/>
    </location>
</feature>
<feature type="mutagenesis site" description="Significant increase in pre-50S ribosome subunits." evidence="4">
    <original>D</original>
    <variation>A</variation>
    <location>
        <position position="22"/>
    </location>
</feature>
<feature type="mutagenesis site" description="Significant increase in pre-50S ribosome subunits, no longer interacts with ribosomal protein uL16." evidence="4">
    <original>E</original>
    <variation>A</variation>
    <location>
        <position position="23"/>
    </location>
</feature>
<feature type="mutagenesis site" description="Partial assembly of 50S ribosomal subunits." evidence="4">
    <location>
        <begin position="105"/>
        <end position="116"/>
    </location>
</feature>
<feature type="helix" evidence="12">
    <location>
        <begin position="29"/>
        <end position="47"/>
    </location>
</feature>
<feature type="helix" evidence="12">
    <location>
        <begin position="51"/>
        <end position="54"/>
    </location>
</feature>
<feature type="helix" evidence="12">
    <location>
        <begin position="61"/>
        <end position="72"/>
    </location>
</feature>
<feature type="helix" evidence="12">
    <location>
        <begin position="75"/>
        <end position="90"/>
    </location>
</feature>
<feature type="helix" evidence="12">
    <location>
        <begin position="95"/>
        <end position="104"/>
    </location>
</feature>
<feature type="helix" evidence="12">
    <location>
        <begin position="109"/>
        <end position="126"/>
    </location>
</feature>
<feature type="strand" evidence="12">
    <location>
        <begin position="129"/>
        <end position="132"/>
    </location>
</feature>
<feature type="helix" evidence="12">
    <location>
        <begin position="133"/>
        <end position="139"/>
    </location>
</feature>
<feature type="helix" evidence="12">
    <location>
        <begin position="145"/>
        <end position="160"/>
    </location>
</feature>
<feature type="helix" evidence="12">
    <location>
        <begin position="168"/>
        <end position="179"/>
    </location>
</feature>
<keyword id="KW-0002">3D-structure</keyword>
<keyword id="KW-0963">Cytoplasm</keyword>
<keyword id="KW-1185">Reference proteome</keyword>
<keyword id="KW-0690">Ribosome biogenesis</keyword>
<keyword id="KW-0694">RNA-binding</keyword>
<keyword id="KW-0699">rRNA-binding</keyword>
<reference key="1">
    <citation type="submission" date="1992-06" db="EMBL/GenBank/DDBJ databases">
        <title>Nucleotide sequence and polypeptide product of x96, a gene mapping at min 96 of the Escherichia coli genetic map.</title>
        <authorList>
            <person name="Rodriguez-Sainz M.C."/>
            <person name="Moreno F."/>
        </authorList>
    </citation>
    <scope>NUCLEOTIDE SEQUENCE [GENOMIC DNA]</scope>
    <source>
        <strain>K12</strain>
    </source>
</reference>
<reference key="2">
    <citation type="journal article" date="1996" name="J. Mol. Biol.">
        <title>Evidence for involvement of Escherichia coli genes pmbA, csrA and a previously unrecognized gene tldD, in the control of DNA gyrase by letD (ccdB) of sex factor F.</title>
        <authorList>
            <person name="Murayama N."/>
            <person name="Shimizu H."/>
            <person name="Takiguchi S."/>
            <person name="Baba Y."/>
            <person name="Amino H."/>
            <person name="Horiuchi T."/>
            <person name="Sekimizu K."/>
            <person name="Miki T."/>
        </authorList>
    </citation>
    <scope>NUCLEOTIDE SEQUENCE [GENOMIC DNA]</scope>
    <source>
        <strain>K12</strain>
    </source>
</reference>
<reference key="3">
    <citation type="journal article" date="1995" name="Nucleic Acids Res.">
        <title>Analysis of the Escherichia coli genome VI: DNA sequence of the region from 92.8 through 100 minutes.</title>
        <authorList>
            <person name="Burland V.D."/>
            <person name="Plunkett G. III"/>
            <person name="Sofia H.J."/>
            <person name="Daniels D.L."/>
            <person name="Blattner F.R."/>
        </authorList>
    </citation>
    <scope>NUCLEOTIDE SEQUENCE [LARGE SCALE GENOMIC DNA]</scope>
    <source>
        <strain>K12 / MG1655 / ATCC 47076</strain>
    </source>
</reference>
<reference key="4">
    <citation type="journal article" date="1997" name="Science">
        <title>The complete genome sequence of Escherichia coli K-12.</title>
        <authorList>
            <person name="Blattner F.R."/>
            <person name="Plunkett G. III"/>
            <person name="Bloch C.A."/>
            <person name="Perna N.T."/>
            <person name="Burland V."/>
            <person name="Riley M."/>
            <person name="Collado-Vides J."/>
            <person name="Glasner J.D."/>
            <person name="Rode C.K."/>
            <person name="Mayhew G.F."/>
            <person name="Gregor J."/>
            <person name="Davis N.W."/>
            <person name="Kirkpatrick H.A."/>
            <person name="Goeden M.A."/>
            <person name="Rose D.J."/>
            <person name="Mau B."/>
            <person name="Shao Y."/>
        </authorList>
    </citation>
    <scope>NUCLEOTIDE SEQUENCE [LARGE SCALE GENOMIC DNA]</scope>
    <source>
        <strain>K12 / MG1655 / ATCC 47076</strain>
    </source>
</reference>
<reference key="5">
    <citation type="journal article" date="2006" name="Mol. Syst. Biol.">
        <title>Highly accurate genome sequences of Escherichia coli K-12 strains MG1655 and W3110.</title>
        <authorList>
            <person name="Hayashi K."/>
            <person name="Morooka N."/>
            <person name="Yamamoto Y."/>
            <person name="Fujita K."/>
            <person name="Isono K."/>
            <person name="Choi S."/>
            <person name="Ohtsubo E."/>
            <person name="Baba T."/>
            <person name="Wanner B.L."/>
            <person name="Mori H."/>
            <person name="Horiuchi T."/>
        </authorList>
    </citation>
    <scope>NUCLEOTIDE SEQUENCE [LARGE SCALE GENOMIC DNA]</scope>
    <source>
        <strain>K12 / W3110 / ATCC 27325 / DSM 5911</strain>
    </source>
</reference>
<reference key="6">
    <citation type="journal article" date="2006" name="J. Bacteriol.">
        <title>The Escherichia coli GTPase CgtAE is involved in late steps of large ribosome assembly.</title>
        <authorList>
            <person name="Jiang M."/>
            <person name="Datta K."/>
            <person name="Walker A."/>
            <person name="Strahler J."/>
            <person name="Bagamasbad P."/>
            <person name="Andrews P.C."/>
            <person name="Maddock J.R."/>
        </authorList>
    </citation>
    <scope>IDENTIFICATION BY MASS SPECTROMETRY</scope>
    <scope>SUBCELLULAR LOCATION</scope>
    <scope>ASSOCIATION WITH THE 50S RIBOSOMAL SUBUNIT</scope>
    <source>
        <strain>K12 / MG1655 / ATCC 47076</strain>
    </source>
</reference>
<reference evidence="11" key="7">
    <citation type="journal article" date="2021" name="Mol. Cell">
        <title>Snapshots of native pre-50S ribosomes reveal a biogenesis factor network and evolutionary specialization.</title>
        <authorList>
            <person name="Nikolay R."/>
            <person name="Hilal T."/>
            <person name="Schmidt S."/>
            <person name="Qin B."/>
            <person name="Schwefel D."/>
            <person name="Vieira-Vieira C.H."/>
            <person name="Mielke T."/>
            <person name="Burger J."/>
            <person name="Loerke J."/>
            <person name="Amikura K."/>
            <person name="Flugel T."/>
            <person name="Ueda T."/>
            <person name="Selbach M."/>
            <person name="Deuerling E."/>
            <person name="Spahn C.M.T."/>
        </authorList>
    </citation>
    <scope>STRUCTURE BY ELECTRON MICROSCOPY (3.30 ANGSTROMS) IN ASSOCIATION WITH PRE-50S RIBOSOMAL SUBUNIT</scope>
    <scope>FUNCTION IN 50S RIBOSOMAL SUBUNIT BIOGENESIS</scope>
    <scope>SUBUNIT</scope>
    <scope>SUBCELLULAR LOCATION</scope>
    <scope>23S RRNA-BINDING</scope>
    <source>
        <strain>K12 / MG1655 / ATCC 47076</strain>
    </source>
</reference>
<reference key="8">
    <citation type="journal article" date="2024" name="Nucleic Acids Res.">
        <title>YjgA plays dual roles in enhancing PTC maturation.</title>
        <authorList>
            <person name="Du M."/>
            <person name="Deng C."/>
            <person name="Yu T."/>
            <person name="Zhou Q."/>
            <person name="Zeng F."/>
        </authorList>
    </citation>
    <scope>STRUCTURE BY ELECTRON MICROSCOPY (3.63 ANGSTROMS) OF 25-83 IN A PRE-50S RIBOSOMAL SUBUNIT</scope>
    <scope>FUNCTION</scope>
    <scope>SUBUNIT</scope>
    <scope>INTERACTION WITH UL16</scope>
    <scope>SUBCELLULAR LOCATION</scope>
    <scope>DOMAIN</scope>
    <scope>DISRUPTION PHENOTYPE</scope>
    <scope>23S RRNA-BINDING</scope>
    <scope>MUTAGENESIS OF 1-MET--ILE-24; 6-GLU--GLU-23; GLU-6; ASP-7; ASP-11; ASP-15; ASP-16; ILE-17; GLU-20; ASP-21; ASP-22; GLU-23 AND 105-LYS--HIS-116</scope>
    <source>
        <strain>B / BL21</strain>
    </source>
</reference>